<feature type="chain" id="PRO_0000231931" description="RNA pyrophosphohydrolase">
    <location>
        <begin position="1"/>
        <end position="165"/>
    </location>
</feature>
<feature type="domain" description="Nudix hydrolase" evidence="1">
    <location>
        <begin position="13"/>
        <end position="154"/>
    </location>
</feature>
<feature type="short sequence motif" description="Nudix box">
    <location>
        <begin position="46"/>
        <end position="67"/>
    </location>
</feature>
<name>RPPH_RHORT</name>
<dbReference type="EC" id="3.6.1.-" evidence="1"/>
<dbReference type="EMBL" id="CP000230">
    <property type="protein sequence ID" value="ABC22031.1"/>
    <property type="molecule type" value="Genomic_DNA"/>
</dbReference>
<dbReference type="RefSeq" id="WP_011388985.1">
    <property type="nucleotide sequence ID" value="NC_007643.1"/>
</dbReference>
<dbReference type="RefSeq" id="YP_426318.1">
    <property type="nucleotide sequence ID" value="NC_007643.1"/>
</dbReference>
<dbReference type="SMR" id="Q2RV14"/>
<dbReference type="STRING" id="269796.Rru_A1230"/>
<dbReference type="EnsemblBacteria" id="ABC22031">
    <property type="protein sequence ID" value="ABC22031"/>
    <property type="gene ID" value="Rru_A1230"/>
</dbReference>
<dbReference type="KEGG" id="rru:Rru_A1230"/>
<dbReference type="PATRIC" id="fig|269796.9.peg.1295"/>
<dbReference type="eggNOG" id="COG1051">
    <property type="taxonomic scope" value="Bacteria"/>
</dbReference>
<dbReference type="HOGENOM" id="CLU_087195_3_0_5"/>
<dbReference type="PhylomeDB" id="Q2RV14"/>
<dbReference type="Proteomes" id="UP000001929">
    <property type="component" value="Chromosome"/>
</dbReference>
<dbReference type="GO" id="GO:0034432">
    <property type="term" value="F:bis(5'-adenosyl)-pentaphosphatase activity"/>
    <property type="evidence" value="ECO:0007669"/>
    <property type="project" value="TreeGrafter"/>
</dbReference>
<dbReference type="GO" id="GO:0008893">
    <property type="term" value="F:guanosine-3',5'-bis(diphosphate) 3'-diphosphatase activity"/>
    <property type="evidence" value="ECO:0007669"/>
    <property type="project" value="TreeGrafter"/>
</dbReference>
<dbReference type="GO" id="GO:0006753">
    <property type="term" value="P:nucleoside phosphate metabolic process"/>
    <property type="evidence" value="ECO:0007669"/>
    <property type="project" value="TreeGrafter"/>
</dbReference>
<dbReference type="GO" id="GO:0019693">
    <property type="term" value="P:ribose phosphate metabolic process"/>
    <property type="evidence" value="ECO:0007669"/>
    <property type="project" value="TreeGrafter"/>
</dbReference>
<dbReference type="CDD" id="cd03671">
    <property type="entry name" value="NUDIX_Ap4A_hydrolase_plant_like"/>
    <property type="match status" value="1"/>
</dbReference>
<dbReference type="Gene3D" id="3.90.79.10">
    <property type="entry name" value="Nucleoside Triphosphate Pyrophosphohydrolase"/>
    <property type="match status" value="1"/>
</dbReference>
<dbReference type="HAMAP" id="MF_00298">
    <property type="entry name" value="Nudix_RppH"/>
    <property type="match status" value="1"/>
</dbReference>
<dbReference type="InterPro" id="IPR020476">
    <property type="entry name" value="Nudix_hydrolase"/>
</dbReference>
<dbReference type="InterPro" id="IPR015797">
    <property type="entry name" value="NUDIX_hydrolase-like_dom_sf"/>
</dbReference>
<dbReference type="InterPro" id="IPR020084">
    <property type="entry name" value="NUDIX_hydrolase_CS"/>
</dbReference>
<dbReference type="InterPro" id="IPR000086">
    <property type="entry name" value="NUDIX_hydrolase_dom"/>
</dbReference>
<dbReference type="InterPro" id="IPR022927">
    <property type="entry name" value="RppH"/>
</dbReference>
<dbReference type="NCBIfam" id="NF001936">
    <property type="entry name" value="PRK00714.1-3"/>
    <property type="match status" value="1"/>
</dbReference>
<dbReference type="NCBIfam" id="NF001937">
    <property type="entry name" value="PRK00714.1-4"/>
    <property type="match status" value="1"/>
</dbReference>
<dbReference type="NCBIfam" id="NF001938">
    <property type="entry name" value="PRK00714.1-5"/>
    <property type="match status" value="1"/>
</dbReference>
<dbReference type="PANTHER" id="PTHR11839:SF22">
    <property type="entry name" value="NUDIX HYDROLASE 26, CHLOROPLASTIC"/>
    <property type="match status" value="1"/>
</dbReference>
<dbReference type="PANTHER" id="PTHR11839">
    <property type="entry name" value="UDP/ADP-SUGAR PYROPHOSPHATASE"/>
    <property type="match status" value="1"/>
</dbReference>
<dbReference type="Pfam" id="PF00293">
    <property type="entry name" value="NUDIX"/>
    <property type="match status" value="1"/>
</dbReference>
<dbReference type="PRINTS" id="PR00502">
    <property type="entry name" value="NUDIXFAMILY"/>
</dbReference>
<dbReference type="SUPFAM" id="SSF55811">
    <property type="entry name" value="Nudix"/>
    <property type="match status" value="1"/>
</dbReference>
<dbReference type="PROSITE" id="PS51462">
    <property type="entry name" value="NUDIX"/>
    <property type="match status" value="1"/>
</dbReference>
<dbReference type="PROSITE" id="PS00893">
    <property type="entry name" value="NUDIX_BOX"/>
    <property type="match status" value="1"/>
</dbReference>
<gene>
    <name evidence="1" type="primary">rppH</name>
    <name evidence="1" type="synonym">nudH</name>
    <name type="ordered locus">Rru_A1230</name>
</gene>
<proteinExistence type="inferred from homology"/>
<protein>
    <recommendedName>
        <fullName evidence="1">RNA pyrophosphohydrolase</fullName>
        <ecNumber evidence="1">3.6.1.-</ecNumber>
    </recommendedName>
    <alternativeName>
        <fullName evidence="1">(Di)nucleoside polyphosphate hydrolase</fullName>
    </alternativeName>
</protein>
<comment type="function">
    <text evidence="1">Accelerates the degradation of transcripts by removing pyrophosphate from the 5'-end of triphosphorylated RNA, leading to a more labile monophosphorylated state that can stimulate subsequent ribonuclease cleavage.</text>
</comment>
<comment type="cofactor">
    <cofactor evidence="1">
        <name>a divalent metal cation</name>
        <dbReference type="ChEBI" id="CHEBI:60240"/>
    </cofactor>
</comment>
<comment type="similarity">
    <text evidence="1">Belongs to the Nudix hydrolase family. RppH subfamily.</text>
</comment>
<sequence>MTPQPPLSAAGLPYRQGVGIMLINARGQVFVARRLDSPEAWQMPQGGIDAGEDPETAAWREMEEEIGTRNALLLGETAGWLGYDLPEELRGRLWGGRFQGQRQKWFAFRFTGQDADINLATAHPEFDAWRWVDVDTLVALIVPFKRPVYEQVVAELAGFAVPQPA</sequence>
<evidence type="ECO:0000255" key="1">
    <source>
        <dbReference type="HAMAP-Rule" id="MF_00298"/>
    </source>
</evidence>
<reference key="1">
    <citation type="journal article" date="2011" name="Stand. Genomic Sci.">
        <title>Complete genome sequence of Rhodospirillum rubrum type strain (S1).</title>
        <authorList>
            <person name="Munk A.C."/>
            <person name="Copeland A."/>
            <person name="Lucas S."/>
            <person name="Lapidus A."/>
            <person name="Del Rio T.G."/>
            <person name="Barry K."/>
            <person name="Detter J.C."/>
            <person name="Hammon N."/>
            <person name="Israni S."/>
            <person name="Pitluck S."/>
            <person name="Brettin T."/>
            <person name="Bruce D."/>
            <person name="Han C."/>
            <person name="Tapia R."/>
            <person name="Gilna P."/>
            <person name="Schmutz J."/>
            <person name="Larimer F."/>
            <person name="Land M."/>
            <person name="Kyrpides N.C."/>
            <person name="Mavromatis K."/>
            <person name="Richardson P."/>
            <person name="Rohde M."/>
            <person name="Goeker M."/>
            <person name="Klenk H.P."/>
            <person name="Zhang Y."/>
            <person name="Roberts G.P."/>
            <person name="Reslewic S."/>
            <person name="Schwartz D.C."/>
        </authorList>
    </citation>
    <scope>NUCLEOTIDE SEQUENCE [LARGE SCALE GENOMIC DNA]</scope>
    <source>
        <strain>ATCC 11170 / ATH 1.1.1 / DSM 467 / LMG 4362 / NCIMB 8255 / S1</strain>
    </source>
</reference>
<organism>
    <name type="scientific">Rhodospirillum rubrum (strain ATCC 11170 / ATH 1.1.1 / DSM 467 / LMG 4362 / NCIMB 8255 / S1)</name>
    <dbReference type="NCBI Taxonomy" id="269796"/>
    <lineage>
        <taxon>Bacteria</taxon>
        <taxon>Pseudomonadati</taxon>
        <taxon>Pseudomonadota</taxon>
        <taxon>Alphaproteobacteria</taxon>
        <taxon>Rhodospirillales</taxon>
        <taxon>Rhodospirillaceae</taxon>
        <taxon>Rhodospirillum</taxon>
    </lineage>
</organism>
<keyword id="KW-0378">Hydrolase</keyword>
<keyword id="KW-1185">Reference proteome</keyword>
<accession>Q2RV14</accession>